<proteinExistence type="inferred from homology"/>
<dbReference type="EC" id="2.7.7.6" evidence="1"/>
<dbReference type="EMBL" id="CP000075">
    <property type="protein sequence ID" value="AAY39554.1"/>
    <property type="molecule type" value="Genomic_DNA"/>
</dbReference>
<dbReference type="RefSeq" id="WP_002555464.1">
    <property type="nucleotide sequence ID" value="NC_007005.1"/>
</dbReference>
<dbReference type="RefSeq" id="YP_237592.1">
    <property type="nucleotide sequence ID" value="NC_007005.1"/>
</dbReference>
<dbReference type="SMR" id="Q4ZMR8"/>
<dbReference type="STRING" id="205918.Psyr_4524"/>
<dbReference type="GeneID" id="96221005"/>
<dbReference type="KEGG" id="psb:Psyr_4524"/>
<dbReference type="PATRIC" id="fig|205918.7.peg.4662"/>
<dbReference type="eggNOG" id="COG0202">
    <property type="taxonomic scope" value="Bacteria"/>
</dbReference>
<dbReference type="HOGENOM" id="CLU_053084_0_1_6"/>
<dbReference type="OrthoDB" id="9805706at2"/>
<dbReference type="Proteomes" id="UP000000426">
    <property type="component" value="Chromosome"/>
</dbReference>
<dbReference type="GO" id="GO:0005737">
    <property type="term" value="C:cytoplasm"/>
    <property type="evidence" value="ECO:0007669"/>
    <property type="project" value="UniProtKB-ARBA"/>
</dbReference>
<dbReference type="GO" id="GO:0000428">
    <property type="term" value="C:DNA-directed RNA polymerase complex"/>
    <property type="evidence" value="ECO:0007669"/>
    <property type="project" value="UniProtKB-KW"/>
</dbReference>
<dbReference type="GO" id="GO:0003677">
    <property type="term" value="F:DNA binding"/>
    <property type="evidence" value="ECO:0007669"/>
    <property type="project" value="UniProtKB-UniRule"/>
</dbReference>
<dbReference type="GO" id="GO:0003899">
    <property type="term" value="F:DNA-directed RNA polymerase activity"/>
    <property type="evidence" value="ECO:0007669"/>
    <property type="project" value="UniProtKB-UniRule"/>
</dbReference>
<dbReference type="GO" id="GO:0046983">
    <property type="term" value="F:protein dimerization activity"/>
    <property type="evidence" value="ECO:0007669"/>
    <property type="project" value="InterPro"/>
</dbReference>
<dbReference type="GO" id="GO:0006351">
    <property type="term" value="P:DNA-templated transcription"/>
    <property type="evidence" value="ECO:0007669"/>
    <property type="project" value="UniProtKB-UniRule"/>
</dbReference>
<dbReference type="CDD" id="cd06928">
    <property type="entry name" value="RNAP_alpha_NTD"/>
    <property type="match status" value="1"/>
</dbReference>
<dbReference type="FunFam" id="1.10.150.20:FF:000001">
    <property type="entry name" value="DNA-directed RNA polymerase subunit alpha"/>
    <property type="match status" value="1"/>
</dbReference>
<dbReference type="FunFam" id="2.170.120.12:FF:000001">
    <property type="entry name" value="DNA-directed RNA polymerase subunit alpha"/>
    <property type="match status" value="1"/>
</dbReference>
<dbReference type="Gene3D" id="1.10.150.20">
    <property type="entry name" value="5' to 3' exonuclease, C-terminal subdomain"/>
    <property type="match status" value="1"/>
</dbReference>
<dbReference type="Gene3D" id="2.170.120.12">
    <property type="entry name" value="DNA-directed RNA polymerase, insert domain"/>
    <property type="match status" value="1"/>
</dbReference>
<dbReference type="Gene3D" id="3.30.1360.10">
    <property type="entry name" value="RNA polymerase, RBP11-like subunit"/>
    <property type="match status" value="1"/>
</dbReference>
<dbReference type="HAMAP" id="MF_00059">
    <property type="entry name" value="RNApol_bact_RpoA"/>
    <property type="match status" value="1"/>
</dbReference>
<dbReference type="InterPro" id="IPR011262">
    <property type="entry name" value="DNA-dir_RNA_pol_insert"/>
</dbReference>
<dbReference type="InterPro" id="IPR011263">
    <property type="entry name" value="DNA-dir_RNA_pol_RpoA/D/Rpb3"/>
</dbReference>
<dbReference type="InterPro" id="IPR011773">
    <property type="entry name" value="DNA-dir_RpoA"/>
</dbReference>
<dbReference type="InterPro" id="IPR036603">
    <property type="entry name" value="RBP11-like"/>
</dbReference>
<dbReference type="InterPro" id="IPR011260">
    <property type="entry name" value="RNAP_asu_C"/>
</dbReference>
<dbReference type="InterPro" id="IPR036643">
    <property type="entry name" value="RNApol_insert_sf"/>
</dbReference>
<dbReference type="NCBIfam" id="NF003513">
    <property type="entry name" value="PRK05182.1-2"/>
    <property type="match status" value="1"/>
</dbReference>
<dbReference type="NCBIfam" id="NF003519">
    <property type="entry name" value="PRK05182.2-5"/>
    <property type="match status" value="1"/>
</dbReference>
<dbReference type="NCBIfam" id="TIGR02027">
    <property type="entry name" value="rpoA"/>
    <property type="match status" value="1"/>
</dbReference>
<dbReference type="Pfam" id="PF01000">
    <property type="entry name" value="RNA_pol_A_bac"/>
    <property type="match status" value="1"/>
</dbReference>
<dbReference type="Pfam" id="PF03118">
    <property type="entry name" value="RNA_pol_A_CTD"/>
    <property type="match status" value="1"/>
</dbReference>
<dbReference type="Pfam" id="PF01193">
    <property type="entry name" value="RNA_pol_L"/>
    <property type="match status" value="1"/>
</dbReference>
<dbReference type="SMART" id="SM00662">
    <property type="entry name" value="RPOLD"/>
    <property type="match status" value="1"/>
</dbReference>
<dbReference type="SUPFAM" id="SSF47789">
    <property type="entry name" value="C-terminal domain of RNA polymerase alpha subunit"/>
    <property type="match status" value="1"/>
</dbReference>
<dbReference type="SUPFAM" id="SSF56553">
    <property type="entry name" value="Insert subdomain of RNA polymerase alpha subunit"/>
    <property type="match status" value="1"/>
</dbReference>
<dbReference type="SUPFAM" id="SSF55257">
    <property type="entry name" value="RBP11-like subunits of RNA polymerase"/>
    <property type="match status" value="1"/>
</dbReference>
<reference key="1">
    <citation type="journal article" date="2005" name="Proc. Natl. Acad. Sci. U.S.A.">
        <title>Comparison of the complete genome sequences of Pseudomonas syringae pv. syringae B728a and pv. tomato DC3000.</title>
        <authorList>
            <person name="Feil H."/>
            <person name="Feil W.S."/>
            <person name="Chain P."/>
            <person name="Larimer F."/>
            <person name="Dibartolo G."/>
            <person name="Copeland A."/>
            <person name="Lykidis A."/>
            <person name="Trong S."/>
            <person name="Nolan M."/>
            <person name="Goltsman E."/>
            <person name="Thiel J."/>
            <person name="Malfatti S."/>
            <person name="Loper J.E."/>
            <person name="Lapidus A."/>
            <person name="Detter J.C."/>
            <person name="Land M."/>
            <person name="Richardson P.M."/>
            <person name="Kyrpides N.C."/>
            <person name="Ivanova N."/>
            <person name="Lindow S.E."/>
        </authorList>
    </citation>
    <scope>NUCLEOTIDE SEQUENCE [LARGE SCALE GENOMIC DNA]</scope>
    <source>
        <strain>B728a</strain>
    </source>
</reference>
<name>RPOA_PSEU2</name>
<organism>
    <name type="scientific">Pseudomonas syringae pv. syringae (strain B728a)</name>
    <dbReference type="NCBI Taxonomy" id="205918"/>
    <lineage>
        <taxon>Bacteria</taxon>
        <taxon>Pseudomonadati</taxon>
        <taxon>Pseudomonadota</taxon>
        <taxon>Gammaproteobacteria</taxon>
        <taxon>Pseudomonadales</taxon>
        <taxon>Pseudomonadaceae</taxon>
        <taxon>Pseudomonas</taxon>
        <taxon>Pseudomonas syringae</taxon>
    </lineage>
</organism>
<protein>
    <recommendedName>
        <fullName evidence="1">DNA-directed RNA polymerase subunit alpha</fullName>
        <shortName evidence="1">RNAP subunit alpha</shortName>
        <ecNumber evidence="1">2.7.7.6</ecNumber>
    </recommendedName>
    <alternativeName>
        <fullName evidence="1">RNA polymerase subunit alpha</fullName>
    </alternativeName>
    <alternativeName>
        <fullName evidence="1">Transcriptase subunit alpha</fullName>
    </alternativeName>
</protein>
<accession>Q4ZMR8</accession>
<feature type="chain" id="PRO_0000225294" description="DNA-directed RNA polymerase subunit alpha">
    <location>
        <begin position="1"/>
        <end position="333"/>
    </location>
</feature>
<feature type="region of interest" description="Alpha N-terminal domain (alpha-NTD)" evidence="1">
    <location>
        <begin position="1"/>
        <end position="234"/>
    </location>
</feature>
<feature type="region of interest" description="Alpha C-terminal domain (alpha-CTD)" evidence="1">
    <location>
        <begin position="248"/>
        <end position="333"/>
    </location>
</feature>
<evidence type="ECO:0000255" key="1">
    <source>
        <dbReference type="HAMAP-Rule" id="MF_00059"/>
    </source>
</evidence>
<sequence>MQISVNEFLTPRHIDVQVVSPTRAKITLEPLERGFGHTLGNALRRILLSSMPGCAVVEAEIDGVLHEYSAIEGVQEDVIEILLNLKGLAIKLHGRDEVTLTLSKKGSGVVTAADIQLDHDVEIVNPDHVIANLASNGVLNMKLTVARGRGYEPADSRQSDEDESRSIGRLQLDSSFSPVRRIAYVVENARVEQRTNLDKLVIDLETNGTLDPEEAIRRAATILQQQLAAFVDLKGDSEPVVIEQEDEIDPILLRPVDDLELTVRSANCLKAENIYYIGDLIQRTEVELLKTPNLGKKSLTEIKDVLASRGLSLGMRLDNWPPASLKKDDKATA</sequence>
<keyword id="KW-0240">DNA-directed RNA polymerase</keyword>
<keyword id="KW-0548">Nucleotidyltransferase</keyword>
<keyword id="KW-0804">Transcription</keyword>
<keyword id="KW-0808">Transferase</keyword>
<comment type="function">
    <text evidence="1">DNA-dependent RNA polymerase catalyzes the transcription of DNA into RNA using the four ribonucleoside triphosphates as substrates.</text>
</comment>
<comment type="catalytic activity">
    <reaction evidence="1">
        <text>RNA(n) + a ribonucleoside 5'-triphosphate = RNA(n+1) + diphosphate</text>
        <dbReference type="Rhea" id="RHEA:21248"/>
        <dbReference type="Rhea" id="RHEA-COMP:14527"/>
        <dbReference type="Rhea" id="RHEA-COMP:17342"/>
        <dbReference type="ChEBI" id="CHEBI:33019"/>
        <dbReference type="ChEBI" id="CHEBI:61557"/>
        <dbReference type="ChEBI" id="CHEBI:140395"/>
        <dbReference type="EC" id="2.7.7.6"/>
    </reaction>
</comment>
<comment type="subunit">
    <text evidence="1">Homodimer. The RNAP catalytic core consists of 2 alpha, 1 beta, 1 beta' and 1 omega subunit. When a sigma factor is associated with the core the holoenzyme is formed, which can initiate transcription.</text>
</comment>
<comment type="domain">
    <text evidence="1">The N-terminal domain is essential for RNAP assembly and basal transcription, whereas the C-terminal domain is involved in interaction with transcriptional regulators and with upstream promoter elements.</text>
</comment>
<comment type="similarity">
    <text evidence="1">Belongs to the RNA polymerase alpha chain family.</text>
</comment>
<gene>
    <name evidence="1" type="primary">rpoA</name>
    <name type="ordered locus">Psyr_4524</name>
</gene>